<name>FH9_ORYSI</name>
<accession>A2YVG8</accession>
<comment type="subcellular location">
    <subcellularLocation>
        <location evidence="4">Membrane</location>
        <topology evidence="4">Single-pass membrane protein</topology>
    </subcellularLocation>
</comment>
<comment type="similarity">
    <text evidence="4">Belongs to the formin-like family. Class-I subfamily.</text>
</comment>
<sequence length="884" mass="97966">MGMAMRCVLVLFSVSPVLLLFNFEMLEVALHLASREKELDTAAVTPSASLSFLSRFRIMLGMNHHRSRGRRHKRCSEAPAPAPAPALVPAHQARSEAPAPLVHVPRKGMPSTHRSHIAPARSPVHKVKDGGHTKIPRSAIVALGVVGLCLVVLGVVIAAFSVRRSRKFKKVCTKAFKPFHHGSRDQRSPAATRKVSSHPSPDPLTLSSIVQYQQNLPNLKQSSESKSLSIQSTIPMGTELIVSDHAVINNSQSDEVESFHSIPCSDLSAGSITELPQQICDRRAIMNRSEYFLQTHDSPSDSSYQSLSPDCTSRLSPKDQTFTASSHLSLRSKTCPEKSDGENAEINCHDGLEITCISGSMEHKEAPIEERARINFRNPPSQHIFPPSYRTDTSQSKINIAFTMTNSEVESSSKESSRIETSSSMGIPKPAPPPPPQKNPPPNLKGQCYGQPPPPPPLPLQIQVGKDGSPLPRLKPLHWDKVRAAPNRSMVWNDIRSSSFEFEFDEQMIKSLFAYNLQGSMKDEEAMNKTASTTKHVIEHHRLQNTTILLKTLNANTSQVCNSVIQGNGLSVQQLEALVKMKPTKEEEEKLLNYDGDINMLDPAENFVKVLLTIPMAFPRMEVMLYKENFDDEVAHIKMSFAMIEGACTELKSSKLFLRLLEAVLKTGNRMNVGTLRGGASAFKLDALLKLADIRGTDGKTTLLHFVVKEMARSKGLKALEKLNETPSSCHDTPTEREEYSSMGTEFVSELSNELGNVKKVASIDLDTLRNSISNLSCGLAQLRNLVEKDLASDDKNNNFLQCMKSFLNHAENTMQGLKADEAQVLLNVRELTEYYHGEVSKDESNLLQIFIIVKDFLGLLDKVCREMRGTKHNQTLNLVLPLK</sequence>
<dbReference type="EMBL" id="CM000133">
    <property type="protein sequence ID" value="EAZ07079.1"/>
    <property type="molecule type" value="Genomic_DNA"/>
</dbReference>
<dbReference type="SMR" id="A2YVG8"/>
<dbReference type="STRING" id="39946.A2YVG8"/>
<dbReference type="EnsemblPlants" id="BGIOSGA028714-TA">
    <property type="protein sequence ID" value="BGIOSGA028714-PA"/>
    <property type="gene ID" value="BGIOSGA028714"/>
</dbReference>
<dbReference type="EnsemblPlants" id="OsIR64_08g0016840.01">
    <property type="protein sequence ID" value="OsIR64_08g0016840.01"/>
    <property type="gene ID" value="OsIR64_08g0016840"/>
</dbReference>
<dbReference type="EnsemblPlants" id="OsLima_08g0016210.01">
    <property type="protein sequence ID" value="OsLima_08g0016210.01"/>
    <property type="gene ID" value="OsLima_08g0016210"/>
</dbReference>
<dbReference type="EnsemblPlants" id="OsPr106_08g0016950.01">
    <property type="protein sequence ID" value="OsPr106_08g0016950.01"/>
    <property type="gene ID" value="OsPr106_08g0016950"/>
</dbReference>
<dbReference type="EnsemblPlants" id="OsZS97_08G016930_01">
    <property type="protein sequence ID" value="OsZS97_08G016930_01"/>
    <property type="gene ID" value="OsZS97_08G016930"/>
</dbReference>
<dbReference type="Gramene" id="BGIOSGA028714-TA">
    <property type="protein sequence ID" value="BGIOSGA028714-PA"/>
    <property type="gene ID" value="BGIOSGA028714"/>
</dbReference>
<dbReference type="Gramene" id="OsIR64_08g0016840.01">
    <property type="protein sequence ID" value="OsIR64_08g0016840.01"/>
    <property type="gene ID" value="OsIR64_08g0016840"/>
</dbReference>
<dbReference type="Gramene" id="OsLima_08g0016210.01">
    <property type="protein sequence ID" value="OsLima_08g0016210.01"/>
    <property type="gene ID" value="OsLima_08g0016210"/>
</dbReference>
<dbReference type="Gramene" id="OsPr106_08g0016950.01">
    <property type="protein sequence ID" value="OsPr106_08g0016950.01"/>
    <property type="gene ID" value="OsPr106_08g0016950"/>
</dbReference>
<dbReference type="Gramene" id="OsZS97_08G016930_01">
    <property type="protein sequence ID" value="OsZS97_08G016930_01"/>
    <property type="gene ID" value="OsZS97_08G016930"/>
</dbReference>
<dbReference type="HOGENOM" id="CLU_007699_2_0_1"/>
<dbReference type="OMA" id="FNFEMLE"/>
<dbReference type="Proteomes" id="UP000007015">
    <property type="component" value="Chromosome 8"/>
</dbReference>
<dbReference type="GO" id="GO:0016020">
    <property type="term" value="C:membrane"/>
    <property type="evidence" value="ECO:0007669"/>
    <property type="project" value="UniProtKB-SubCell"/>
</dbReference>
<dbReference type="GO" id="GO:0051015">
    <property type="term" value="F:actin filament binding"/>
    <property type="evidence" value="ECO:0007669"/>
    <property type="project" value="InterPro"/>
</dbReference>
<dbReference type="GO" id="GO:0045010">
    <property type="term" value="P:actin nucleation"/>
    <property type="evidence" value="ECO:0007669"/>
    <property type="project" value="InterPro"/>
</dbReference>
<dbReference type="Gene3D" id="1.20.58.2220">
    <property type="entry name" value="Formin, FH2 domain"/>
    <property type="match status" value="1"/>
</dbReference>
<dbReference type="InterPro" id="IPR015425">
    <property type="entry name" value="FH2_Formin"/>
</dbReference>
<dbReference type="InterPro" id="IPR042201">
    <property type="entry name" value="FH2_Formin_sf"/>
</dbReference>
<dbReference type="InterPro" id="IPR027643">
    <property type="entry name" value="Formin-like_plant"/>
</dbReference>
<dbReference type="PANTHER" id="PTHR23213:SF177">
    <property type="entry name" value="FORMIN-LIKE PROTEIN 11"/>
    <property type="match status" value="1"/>
</dbReference>
<dbReference type="PANTHER" id="PTHR23213">
    <property type="entry name" value="FORMIN-RELATED"/>
    <property type="match status" value="1"/>
</dbReference>
<dbReference type="Pfam" id="PF02181">
    <property type="entry name" value="FH2"/>
    <property type="match status" value="1"/>
</dbReference>
<dbReference type="SMART" id="SM00498">
    <property type="entry name" value="FH2"/>
    <property type="match status" value="1"/>
</dbReference>
<dbReference type="SUPFAM" id="SSF101447">
    <property type="entry name" value="Formin homology 2 domain (FH2 domain)"/>
    <property type="match status" value="1"/>
</dbReference>
<dbReference type="PROSITE" id="PS51444">
    <property type="entry name" value="FH2"/>
    <property type="match status" value="1"/>
</dbReference>
<protein>
    <recommendedName>
        <fullName>Formin-like protein 9</fullName>
    </recommendedName>
    <alternativeName>
        <fullName>OsFH9</fullName>
    </alternativeName>
</protein>
<reference key="1">
    <citation type="journal article" date="2005" name="PLoS Biol.">
        <title>The genomes of Oryza sativa: a history of duplications.</title>
        <authorList>
            <person name="Yu J."/>
            <person name="Wang J."/>
            <person name="Lin W."/>
            <person name="Li S."/>
            <person name="Li H."/>
            <person name="Zhou J."/>
            <person name="Ni P."/>
            <person name="Dong W."/>
            <person name="Hu S."/>
            <person name="Zeng C."/>
            <person name="Zhang J."/>
            <person name="Zhang Y."/>
            <person name="Li R."/>
            <person name="Xu Z."/>
            <person name="Li S."/>
            <person name="Li X."/>
            <person name="Zheng H."/>
            <person name="Cong L."/>
            <person name="Lin L."/>
            <person name="Yin J."/>
            <person name="Geng J."/>
            <person name="Li G."/>
            <person name="Shi J."/>
            <person name="Liu J."/>
            <person name="Lv H."/>
            <person name="Li J."/>
            <person name="Wang J."/>
            <person name="Deng Y."/>
            <person name="Ran L."/>
            <person name="Shi X."/>
            <person name="Wang X."/>
            <person name="Wu Q."/>
            <person name="Li C."/>
            <person name="Ren X."/>
            <person name="Wang J."/>
            <person name="Wang X."/>
            <person name="Li D."/>
            <person name="Liu D."/>
            <person name="Zhang X."/>
            <person name="Ji Z."/>
            <person name="Zhao W."/>
            <person name="Sun Y."/>
            <person name="Zhang Z."/>
            <person name="Bao J."/>
            <person name="Han Y."/>
            <person name="Dong L."/>
            <person name="Ji J."/>
            <person name="Chen P."/>
            <person name="Wu S."/>
            <person name="Liu J."/>
            <person name="Xiao Y."/>
            <person name="Bu D."/>
            <person name="Tan J."/>
            <person name="Yang L."/>
            <person name="Ye C."/>
            <person name="Zhang J."/>
            <person name="Xu J."/>
            <person name="Zhou Y."/>
            <person name="Yu Y."/>
            <person name="Zhang B."/>
            <person name="Zhuang S."/>
            <person name="Wei H."/>
            <person name="Liu B."/>
            <person name="Lei M."/>
            <person name="Yu H."/>
            <person name="Li Y."/>
            <person name="Xu H."/>
            <person name="Wei S."/>
            <person name="He X."/>
            <person name="Fang L."/>
            <person name="Zhang Z."/>
            <person name="Zhang Y."/>
            <person name="Huang X."/>
            <person name="Su Z."/>
            <person name="Tong W."/>
            <person name="Li J."/>
            <person name="Tong Z."/>
            <person name="Li S."/>
            <person name="Ye J."/>
            <person name="Wang L."/>
            <person name="Fang L."/>
            <person name="Lei T."/>
            <person name="Chen C.-S."/>
            <person name="Chen H.-C."/>
            <person name="Xu Z."/>
            <person name="Li H."/>
            <person name="Huang H."/>
            <person name="Zhang F."/>
            <person name="Xu H."/>
            <person name="Li N."/>
            <person name="Zhao C."/>
            <person name="Li S."/>
            <person name="Dong L."/>
            <person name="Huang Y."/>
            <person name="Li L."/>
            <person name="Xi Y."/>
            <person name="Qi Q."/>
            <person name="Li W."/>
            <person name="Zhang B."/>
            <person name="Hu W."/>
            <person name="Zhang Y."/>
            <person name="Tian X."/>
            <person name="Jiao Y."/>
            <person name="Liang X."/>
            <person name="Jin J."/>
            <person name="Gao L."/>
            <person name="Zheng W."/>
            <person name="Hao B."/>
            <person name="Liu S.-M."/>
            <person name="Wang W."/>
            <person name="Yuan L."/>
            <person name="Cao M."/>
            <person name="McDermott J."/>
            <person name="Samudrala R."/>
            <person name="Wang J."/>
            <person name="Wong G.K.-S."/>
            <person name="Yang H."/>
        </authorList>
    </citation>
    <scope>NUCLEOTIDE SEQUENCE [LARGE SCALE GENOMIC DNA]</scope>
    <source>
        <strain>cv. 93-11</strain>
    </source>
</reference>
<reference key="2">
    <citation type="journal article" date="2004" name="BMC Genomics">
        <title>Formin homology 2 domains occur in multiple contexts in angiosperms.</title>
        <authorList>
            <person name="Cvrckova F."/>
            <person name="Novotny M."/>
            <person name="Pickova D."/>
            <person name="Zarsky V."/>
        </authorList>
    </citation>
    <scope>GENE FAMILY</scope>
    <scope>NOMENCLATURE</scope>
</reference>
<proteinExistence type="inferred from homology"/>
<evidence type="ECO:0000255" key="1"/>
<evidence type="ECO:0000255" key="2">
    <source>
        <dbReference type="PROSITE-ProRule" id="PRU00774"/>
    </source>
</evidence>
<evidence type="ECO:0000256" key="3">
    <source>
        <dbReference type="SAM" id="MobiDB-lite"/>
    </source>
</evidence>
<evidence type="ECO:0000305" key="4"/>
<feature type="signal peptide" evidence="1">
    <location>
        <begin position="1"/>
        <end position="19"/>
    </location>
</feature>
<feature type="chain" id="PRO_0000318999" description="Formin-like protein 9">
    <location>
        <begin position="20"/>
        <end position="884"/>
    </location>
</feature>
<feature type="transmembrane region" description="Helical" evidence="1">
    <location>
        <begin position="140"/>
        <end position="160"/>
    </location>
</feature>
<feature type="domain" description="FH2" evidence="2">
    <location>
        <begin position="464"/>
        <end position="884"/>
    </location>
</feature>
<feature type="region of interest" description="Disordered" evidence="3">
    <location>
        <begin position="179"/>
        <end position="204"/>
    </location>
</feature>
<feature type="region of interest" description="Disordered" evidence="3">
    <location>
        <begin position="295"/>
        <end position="318"/>
    </location>
</feature>
<feature type="region of interest" description="Disordered" evidence="3">
    <location>
        <begin position="403"/>
        <end position="473"/>
    </location>
</feature>
<feature type="compositionally biased region" description="Low complexity" evidence="3">
    <location>
        <begin position="300"/>
        <end position="310"/>
    </location>
</feature>
<feature type="compositionally biased region" description="Pro residues" evidence="3">
    <location>
        <begin position="429"/>
        <end position="443"/>
    </location>
</feature>
<organism>
    <name type="scientific">Oryza sativa subsp. indica</name>
    <name type="common">Rice</name>
    <dbReference type="NCBI Taxonomy" id="39946"/>
    <lineage>
        <taxon>Eukaryota</taxon>
        <taxon>Viridiplantae</taxon>
        <taxon>Streptophyta</taxon>
        <taxon>Embryophyta</taxon>
        <taxon>Tracheophyta</taxon>
        <taxon>Spermatophyta</taxon>
        <taxon>Magnoliopsida</taxon>
        <taxon>Liliopsida</taxon>
        <taxon>Poales</taxon>
        <taxon>Poaceae</taxon>
        <taxon>BOP clade</taxon>
        <taxon>Oryzoideae</taxon>
        <taxon>Oryzeae</taxon>
        <taxon>Oryzinae</taxon>
        <taxon>Oryza</taxon>
        <taxon>Oryza sativa</taxon>
    </lineage>
</organism>
<gene>
    <name type="primary">FH9</name>
    <name type="ORF">OsI_028311</name>
</gene>
<keyword id="KW-0472">Membrane</keyword>
<keyword id="KW-1185">Reference proteome</keyword>
<keyword id="KW-0732">Signal</keyword>
<keyword id="KW-0812">Transmembrane</keyword>
<keyword id="KW-1133">Transmembrane helix</keyword>